<feature type="chain" id="PRO_1000193420" description="DNA repair protein RecO">
    <location>
        <begin position="1"/>
        <end position="237"/>
    </location>
</feature>
<gene>
    <name evidence="1" type="primary">recO</name>
    <name type="ordered locus">RC0812</name>
</gene>
<sequence>MNIKDIGVIIAKKPLKENTFIITVFTKNHGLYSGVVKEFSKKSKFIYQEGNIIDFLWQARLHEHIGMAKCELIKSYTGYFITNKAKLYAFNSVISLIKELFHEREEHSKFFSFLINYLDNLSKNFCFRDYINFELALLAETGYKLDLTKCGVSHVTTDLIYVSPKSARALSYEVGKPYKDKLLMLPRFLLSDNSEITLEEKRQALALTNYFFNRYLFHNNRQVEARQTFIEYTLNNF</sequence>
<organism>
    <name type="scientific">Rickettsia conorii (strain ATCC VR-613 / Malish 7)</name>
    <dbReference type="NCBI Taxonomy" id="272944"/>
    <lineage>
        <taxon>Bacteria</taxon>
        <taxon>Pseudomonadati</taxon>
        <taxon>Pseudomonadota</taxon>
        <taxon>Alphaproteobacteria</taxon>
        <taxon>Rickettsiales</taxon>
        <taxon>Rickettsiaceae</taxon>
        <taxon>Rickettsieae</taxon>
        <taxon>Rickettsia</taxon>
        <taxon>spotted fever group</taxon>
    </lineage>
</organism>
<dbReference type="EMBL" id="AE006914">
    <property type="protein sequence ID" value="AAL03350.1"/>
    <property type="molecule type" value="Genomic_DNA"/>
</dbReference>
<dbReference type="PIR" id="D97801">
    <property type="entry name" value="D97801"/>
</dbReference>
<dbReference type="RefSeq" id="WP_004998176.1">
    <property type="nucleotide sequence ID" value="NC_003103.1"/>
</dbReference>
<dbReference type="SMR" id="Q92HF9"/>
<dbReference type="GeneID" id="95361344"/>
<dbReference type="KEGG" id="rco:RC0812"/>
<dbReference type="HOGENOM" id="CLU_086029_0_0_5"/>
<dbReference type="Proteomes" id="UP000000816">
    <property type="component" value="Chromosome"/>
</dbReference>
<dbReference type="GO" id="GO:0043590">
    <property type="term" value="C:bacterial nucleoid"/>
    <property type="evidence" value="ECO:0007669"/>
    <property type="project" value="TreeGrafter"/>
</dbReference>
<dbReference type="GO" id="GO:0006310">
    <property type="term" value="P:DNA recombination"/>
    <property type="evidence" value="ECO:0007669"/>
    <property type="project" value="UniProtKB-UniRule"/>
</dbReference>
<dbReference type="GO" id="GO:0006302">
    <property type="term" value="P:double-strand break repair"/>
    <property type="evidence" value="ECO:0007669"/>
    <property type="project" value="TreeGrafter"/>
</dbReference>
<dbReference type="Gene3D" id="2.40.50.140">
    <property type="entry name" value="Nucleic acid-binding proteins"/>
    <property type="match status" value="1"/>
</dbReference>
<dbReference type="Gene3D" id="1.20.1440.120">
    <property type="entry name" value="Recombination protein O, C-terminal domain"/>
    <property type="match status" value="1"/>
</dbReference>
<dbReference type="HAMAP" id="MF_00201">
    <property type="entry name" value="RecO"/>
    <property type="match status" value="1"/>
</dbReference>
<dbReference type="InterPro" id="IPR037278">
    <property type="entry name" value="ARFGAP/RecO"/>
</dbReference>
<dbReference type="InterPro" id="IPR022572">
    <property type="entry name" value="DNA_rep/recomb_RecO_N"/>
</dbReference>
<dbReference type="InterPro" id="IPR012340">
    <property type="entry name" value="NA-bd_OB-fold"/>
</dbReference>
<dbReference type="InterPro" id="IPR003717">
    <property type="entry name" value="RecO"/>
</dbReference>
<dbReference type="InterPro" id="IPR042242">
    <property type="entry name" value="RecO_C"/>
</dbReference>
<dbReference type="NCBIfam" id="TIGR00613">
    <property type="entry name" value="reco"/>
    <property type="match status" value="1"/>
</dbReference>
<dbReference type="PANTHER" id="PTHR33991">
    <property type="entry name" value="DNA REPAIR PROTEIN RECO"/>
    <property type="match status" value="1"/>
</dbReference>
<dbReference type="PANTHER" id="PTHR33991:SF1">
    <property type="entry name" value="DNA REPAIR PROTEIN RECO"/>
    <property type="match status" value="1"/>
</dbReference>
<dbReference type="Pfam" id="PF02565">
    <property type="entry name" value="RecO_C"/>
    <property type="match status" value="1"/>
</dbReference>
<dbReference type="Pfam" id="PF11967">
    <property type="entry name" value="RecO_N"/>
    <property type="match status" value="1"/>
</dbReference>
<dbReference type="SUPFAM" id="SSF57863">
    <property type="entry name" value="ArfGap/RecO-like zinc finger"/>
    <property type="match status" value="1"/>
</dbReference>
<dbReference type="SUPFAM" id="SSF50249">
    <property type="entry name" value="Nucleic acid-binding proteins"/>
    <property type="match status" value="1"/>
</dbReference>
<evidence type="ECO:0000255" key="1">
    <source>
        <dbReference type="HAMAP-Rule" id="MF_00201"/>
    </source>
</evidence>
<reference key="1">
    <citation type="journal article" date="2001" name="Science">
        <title>Mechanisms of evolution in Rickettsia conorii and R. prowazekii.</title>
        <authorList>
            <person name="Ogata H."/>
            <person name="Audic S."/>
            <person name="Renesto-Audiffren P."/>
            <person name="Fournier P.-E."/>
            <person name="Barbe V."/>
            <person name="Samson D."/>
            <person name="Roux V."/>
            <person name="Cossart P."/>
            <person name="Weissenbach J."/>
            <person name="Claverie J.-M."/>
            <person name="Raoult D."/>
        </authorList>
    </citation>
    <scope>NUCLEOTIDE SEQUENCE [LARGE SCALE GENOMIC DNA]</scope>
    <source>
        <strain>ATCC VR-613 / Malish 7</strain>
    </source>
</reference>
<comment type="function">
    <text evidence="1">Involved in DNA repair and RecF pathway recombination.</text>
</comment>
<comment type="similarity">
    <text evidence="1">Belongs to the RecO family.</text>
</comment>
<protein>
    <recommendedName>
        <fullName evidence="1">DNA repair protein RecO</fullName>
    </recommendedName>
    <alternativeName>
        <fullName evidence="1">Recombination protein O</fullName>
    </alternativeName>
</protein>
<keyword id="KW-0227">DNA damage</keyword>
<keyword id="KW-0233">DNA recombination</keyword>
<keyword id="KW-0234">DNA repair</keyword>
<accession>Q92HF9</accession>
<name>RECO_RICCN</name>
<proteinExistence type="inferred from homology"/>